<accession>Q8XJH6</accession>
<comment type="function">
    <text evidence="1">Catalyzes the attachment of alanine to tRNA(Ala) in a two-step reaction: alanine is first activated by ATP to form Ala-AMP and then transferred to the acceptor end of tRNA(Ala). Also edits incorrectly charged Ser-tRNA(Ala) and Gly-tRNA(Ala) via its editing domain.</text>
</comment>
<comment type="catalytic activity">
    <reaction evidence="1">
        <text>tRNA(Ala) + L-alanine + ATP = L-alanyl-tRNA(Ala) + AMP + diphosphate</text>
        <dbReference type="Rhea" id="RHEA:12540"/>
        <dbReference type="Rhea" id="RHEA-COMP:9657"/>
        <dbReference type="Rhea" id="RHEA-COMP:9923"/>
        <dbReference type="ChEBI" id="CHEBI:30616"/>
        <dbReference type="ChEBI" id="CHEBI:33019"/>
        <dbReference type="ChEBI" id="CHEBI:57972"/>
        <dbReference type="ChEBI" id="CHEBI:78442"/>
        <dbReference type="ChEBI" id="CHEBI:78497"/>
        <dbReference type="ChEBI" id="CHEBI:456215"/>
        <dbReference type="EC" id="6.1.1.7"/>
    </reaction>
</comment>
<comment type="cofactor">
    <cofactor evidence="1">
        <name>Zn(2+)</name>
        <dbReference type="ChEBI" id="CHEBI:29105"/>
    </cofactor>
    <text evidence="1">Binds 1 zinc ion per subunit.</text>
</comment>
<comment type="subcellular location">
    <subcellularLocation>
        <location evidence="1">Cytoplasm</location>
    </subcellularLocation>
</comment>
<comment type="domain">
    <text evidence="1">Consists of three domains; the N-terminal catalytic domain, the editing domain and the C-terminal C-Ala domain. The editing domain removes incorrectly charged amino acids, while the C-Ala domain, along with tRNA(Ala), serves as a bridge to cooperatively bring together the editing and aminoacylation centers thus stimulating deacylation of misacylated tRNAs.</text>
</comment>
<comment type="similarity">
    <text evidence="1">Belongs to the class-II aminoacyl-tRNA synthetase family.</text>
</comment>
<dbReference type="EC" id="6.1.1.7" evidence="1"/>
<dbReference type="EMBL" id="BA000016">
    <property type="protein sequence ID" value="BAB81486.1"/>
    <property type="molecule type" value="Genomic_DNA"/>
</dbReference>
<dbReference type="RefSeq" id="WP_003473083.1">
    <property type="nucleotide sequence ID" value="NC_003366.1"/>
</dbReference>
<dbReference type="SMR" id="Q8XJH6"/>
<dbReference type="STRING" id="195102.gene:10491044"/>
<dbReference type="KEGG" id="cpe:CPE1780"/>
<dbReference type="HOGENOM" id="CLU_004485_1_1_9"/>
<dbReference type="Proteomes" id="UP000000818">
    <property type="component" value="Chromosome"/>
</dbReference>
<dbReference type="GO" id="GO:0005829">
    <property type="term" value="C:cytosol"/>
    <property type="evidence" value="ECO:0007669"/>
    <property type="project" value="TreeGrafter"/>
</dbReference>
<dbReference type="GO" id="GO:0004813">
    <property type="term" value="F:alanine-tRNA ligase activity"/>
    <property type="evidence" value="ECO:0007669"/>
    <property type="project" value="UniProtKB-UniRule"/>
</dbReference>
<dbReference type="GO" id="GO:0002161">
    <property type="term" value="F:aminoacyl-tRNA deacylase activity"/>
    <property type="evidence" value="ECO:0007669"/>
    <property type="project" value="TreeGrafter"/>
</dbReference>
<dbReference type="GO" id="GO:0005524">
    <property type="term" value="F:ATP binding"/>
    <property type="evidence" value="ECO:0007669"/>
    <property type="project" value="UniProtKB-UniRule"/>
</dbReference>
<dbReference type="GO" id="GO:0140096">
    <property type="term" value="F:catalytic activity, acting on a protein"/>
    <property type="evidence" value="ECO:0007669"/>
    <property type="project" value="UniProtKB-ARBA"/>
</dbReference>
<dbReference type="GO" id="GO:0016740">
    <property type="term" value="F:transferase activity"/>
    <property type="evidence" value="ECO:0007669"/>
    <property type="project" value="UniProtKB-ARBA"/>
</dbReference>
<dbReference type="GO" id="GO:0000049">
    <property type="term" value="F:tRNA binding"/>
    <property type="evidence" value="ECO:0007669"/>
    <property type="project" value="UniProtKB-KW"/>
</dbReference>
<dbReference type="GO" id="GO:0008270">
    <property type="term" value="F:zinc ion binding"/>
    <property type="evidence" value="ECO:0007669"/>
    <property type="project" value="UniProtKB-UniRule"/>
</dbReference>
<dbReference type="GO" id="GO:0006419">
    <property type="term" value="P:alanyl-tRNA aminoacylation"/>
    <property type="evidence" value="ECO:0007669"/>
    <property type="project" value="UniProtKB-UniRule"/>
</dbReference>
<dbReference type="CDD" id="cd00673">
    <property type="entry name" value="AlaRS_core"/>
    <property type="match status" value="1"/>
</dbReference>
<dbReference type="FunFam" id="3.10.310.40:FF:000001">
    <property type="entry name" value="Alanine--tRNA ligase"/>
    <property type="match status" value="1"/>
</dbReference>
<dbReference type="FunFam" id="3.30.54.20:FF:000001">
    <property type="entry name" value="Alanine--tRNA ligase"/>
    <property type="match status" value="1"/>
</dbReference>
<dbReference type="FunFam" id="3.30.930.10:FF:000004">
    <property type="entry name" value="Alanine--tRNA ligase"/>
    <property type="match status" value="1"/>
</dbReference>
<dbReference type="FunFam" id="3.30.980.10:FF:000004">
    <property type="entry name" value="Alanine--tRNA ligase, cytoplasmic"/>
    <property type="match status" value="1"/>
</dbReference>
<dbReference type="Gene3D" id="2.40.30.130">
    <property type="match status" value="1"/>
</dbReference>
<dbReference type="Gene3D" id="3.10.310.40">
    <property type="match status" value="1"/>
</dbReference>
<dbReference type="Gene3D" id="3.30.54.20">
    <property type="match status" value="1"/>
</dbReference>
<dbReference type="Gene3D" id="6.10.250.550">
    <property type="match status" value="1"/>
</dbReference>
<dbReference type="Gene3D" id="3.30.930.10">
    <property type="entry name" value="Bira Bifunctional Protein, Domain 2"/>
    <property type="match status" value="1"/>
</dbReference>
<dbReference type="Gene3D" id="3.30.980.10">
    <property type="entry name" value="Threonyl-trna Synthetase, Chain A, domain 2"/>
    <property type="match status" value="1"/>
</dbReference>
<dbReference type="HAMAP" id="MF_00036_B">
    <property type="entry name" value="Ala_tRNA_synth_B"/>
    <property type="match status" value="1"/>
</dbReference>
<dbReference type="InterPro" id="IPR045864">
    <property type="entry name" value="aa-tRNA-synth_II/BPL/LPL"/>
</dbReference>
<dbReference type="InterPro" id="IPR002318">
    <property type="entry name" value="Ala-tRNA-lgiase_IIc"/>
</dbReference>
<dbReference type="InterPro" id="IPR018162">
    <property type="entry name" value="Ala-tRNA-ligase_IIc_anticod-bd"/>
</dbReference>
<dbReference type="InterPro" id="IPR018165">
    <property type="entry name" value="Ala-tRNA-synth_IIc_core"/>
</dbReference>
<dbReference type="InterPro" id="IPR018164">
    <property type="entry name" value="Ala-tRNA-synth_IIc_N"/>
</dbReference>
<dbReference type="InterPro" id="IPR050058">
    <property type="entry name" value="Ala-tRNA_ligase"/>
</dbReference>
<dbReference type="InterPro" id="IPR023033">
    <property type="entry name" value="Ala_tRNA_ligase_euk/bac"/>
</dbReference>
<dbReference type="InterPro" id="IPR003156">
    <property type="entry name" value="DHHA1_dom"/>
</dbReference>
<dbReference type="InterPro" id="IPR018163">
    <property type="entry name" value="Thr/Ala-tRNA-synth_IIc_edit"/>
</dbReference>
<dbReference type="InterPro" id="IPR009000">
    <property type="entry name" value="Transl_B-barrel_sf"/>
</dbReference>
<dbReference type="InterPro" id="IPR012947">
    <property type="entry name" value="tRNA_SAD"/>
</dbReference>
<dbReference type="NCBIfam" id="TIGR00344">
    <property type="entry name" value="alaS"/>
    <property type="match status" value="1"/>
</dbReference>
<dbReference type="PANTHER" id="PTHR11777:SF9">
    <property type="entry name" value="ALANINE--TRNA LIGASE, CYTOPLASMIC"/>
    <property type="match status" value="1"/>
</dbReference>
<dbReference type="PANTHER" id="PTHR11777">
    <property type="entry name" value="ALANYL-TRNA SYNTHETASE"/>
    <property type="match status" value="1"/>
</dbReference>
<dbReference type="Pfam" id="PF02272">
    <property type="entry name" value="DHHA1"/>
    <property type="match status" value="1"/>
</dbReference>
<dbReference type="Pfam" id="PF01411">
    <property type="entry name" value="tRNA-synt_2c"/>
    <property type="match status" value="1"/>
</dbReference>
<dbReference type="Pfam" id="PF07973">
    <property type="entry name" value="tRNA_SAD"/>
    <property type="match status" value="1"/>
</dbReference>
<dbReference type="PRINTS" id="PR00980">
    <property type="entry name" value="TRNASYNTHALA"/>
</dbReference>
<dbReference type="SMART" id="SM00863">
    <property type="entry name" value="tRNA_SAD"/>
    <property type="match status" value="1"/>
</dbReference>
<dbReference type="SUPFAM" id="SSF55681">
    <property type="entry name" value="Class II aaRS and biotin synthetases"/>
    <property type="match status" value="1"/>
</dbReference>
<dbReference type="SUPFAM" id="SSF101353">
    <property type="entry name" value="Putative anticodon-binding domain of alanyl-tRNA synthetase (AlaRS)"/>
    <property type="match status" value="1"/>
</dbReference>
<dbReference type="SUPFAM" id="SSF55186">
    <property type="entry name" value="ThrRS/AlaRS common domain"/>
    <property type="match status" value="1"/>
</dbReference>
<dbReference type="SUPFAM" id="SSF50447">
    <property type="entry name" value="Translation proteins"/>
    <property type="match status" value="1"/>
</dbReference>
<dbReference type="PROSITE" id="PS50860">
    <property type="entry name" value="AA_TRNA_LIGASE_II_ALA"/>
    <property type="match status" value="1"/>
</dbReference>
<feature type="chain" id="PRO_0000075094" description="Alanine--tRNA ligase">
    <location>
        <begin position="1"/>
        <end position="879"/>
    </location>
</feature>
<feature type="binding site" evidence="1">
    <location>
        <position position="566"/>
    </location>
    <ligand>
        <name>Zn(2+)</name>
        <dbReference type="ChEBI" id="CHEBI:29105"/>
    </ligand>
</feature>
<feature type="binding site" evidence="1">
    <location>
        <position position="570"/>
    </location>
    <ligand>
        <name>Zn(2+)</name>
        <dbReference type="ChEBI" id="CHEBI:29105"/>
    </ligand>
</feature>
<feature type="binding site" evidence="1">
    <location>
        <position position="668"/>
    </location>
    <ligand>
        <name>Zn(2+)</name>
        <dbReference type="ChEBI" id="CHEBI:29105"/>
    </ligand>
</feature>
<feature type="binding site" evidence="1">
    <location>
        <position position="672"/>
    </location>
    <ligand>
        <name>Zn(2+)</name>
        <dbReference type="ChEBI" id="CHEBI:29105"/>
    </ligand>
</feature>
<sequence>MKFMGANELREKYLSFFESKDHLRLQSFPLVPKNDKSLLLINAGMAPLKPYFTGLEEPPKRRITTCQKCIRTGDIENVGKTSRHGTFFEMLGNFSFGDYFKSEIIPWAWEFITETLGIPKDKLYVTIYLNDDEAYDIWTSKTDVDPSRIFRLGKDDNFWEIGVGPCGPCTEIHFDRGEGKVETVEEFLEASDADRIVEFWNLVFTQFDKDEEGNYNELAQKNIDTGMGLERIATIMQGVDNIFEIDTVKNILNKACELTNAKYGEDKDKDVSLRIITDHGKSVTFLICDGVQPSNEGRGYVLRRLLRRAARHGRLLGVKGIFLNEMVDAVVENYGEAYPELREKADYIKKIIKLEEERFNETIDSGMDILMSYISEMEEKNEKVLSGAKAFKLYDTYGFPLELTQEILEEKGLELDIENFNKEMKEQRERARNARGESSYMGSEESPVNKVDASIVTEFDGYVNLELNSKVIVLGNNEEFKAELKEGEEGFLLTDKTPFYAEMGGQVGDRGNITSETGMAIVTDCKKNVGGKFVHYIKVIEGSLKEGQEVKLSVDASRRSNICKNHTATHMLHEALKEVLGDHVNQSGSYVDEERLRFDFTHFAALTEEELEKVELLVNEKIMTVSVVDTKEMSLDEARNSGATCLFDEKYAEKVRVVSVGDFSKELCGGTHVANSGEIGLFKIVSESGVAAGIRRIEAVTGISALKFMELKNNMLKEAASMLKCNEKDIAKRIAAQAHELKEKDKEIAELKAKLVQGAEDDILKDKVEINGVELVTAELKDVDGNSLRDLADKVRNKLNNGIVVLASDNGGKVNLVAMATKNSLANGVHCGKVIKEVAAVVGGGGGGRPDMAQAGGKNPENIAKALEKAKEVVELLVK</sequence>
<proteinExistence type="inferred from homology"/>
<protein>
    <recommendedName>
        <fullName evidence="1">Alanine--tRNA ligase</fullName>
        <ecNumber evidence="1">6.1.1.7</ecNumber>
    </recommendedName>
    <alternativeName>
        <fullName evidence="1">Alanyl-tRNA synthetase</fullName>
        <shortName evidence="1">AlaRS</shortName>
    </alternativeName>
</protein>
<keyword id="KW-0030">Aminoacyl-tRNA synthetase</keyword>
<keyword id="KW-0067">ATP-binding</keyword>
<keyword id="KW-0963">Cytoplasm</keyword>
<keyword id="KW-0436">Ligase</keyword>
<keyword id="KW-0479">Metal-binding</keyword>
<keyword id="KW-0547">Nucleotide-binding</keyword>
<keyword id="KW-0648">Protein biosynthesis</keyword>
<keyword id="KW-1185">Reference proteome</keyword>
<keyword id="KW-0694">RNA-binding</keyword>
<keyword id="KW-0820">tRNA-binding</keyword>
<keyword id="KW-0862">Zinc</keyword>
<reference key="1">
    <citation type="journal article" date="2002" name="Proc. Natl. Acad. Sci. U.S.A.">
        <title>Complete genome sequence of Clostridium perfringens, an anaerobic flesh-eater.</title>
        <authorList>
            <person name="Shimizu T."/>
            <person name="Ohtani K."/>
            <person name="Hirakawa H."/>
            <person name="Ohshima K."/>
            <person name="Yamashita A."/>
            <person name="Shiba T."/>
            <person name="Ogasawara N."/>
            <person name="Hattori M."/>
            <person name="Kuhara S."/>
            <person name="Hayashi H."/>
        </authorList>
    </citation>
    <scope>NUCLEOTIDE SEQUENCE [LARGE SCALE GENOMIC DNA]</scope>
    <source>
        <strain>13 / Type A</strain>
    </source>
</reference>
<gene>
    <name evidence="1" type="primary">alaS</name>
    <name type="ordered locus">CPE1780</name>
</gene>
<evidence type="ECO:0000255" key="1">
    <source>
        <dbReference type="HAMAP-Rule" id="MF_00036"/>
    </source>
</evidence>
<name>SYA_CLOPE</name>
<organism>
    <name type="scientific">Clostridium perfringens (strain 13 / Type A)</name>
    <dbReference type="NCBI Taxonomy" id="195102"/>
    <lineage>
        <taxon>Bacteria</taxon>
        <taxon>Bacillati</taxon>
        <taxon>Bacillota</taxon>
        <taxon>Clostridia</taxon>
        <taxon>Eubacteriales</taxon>
        <taxon>Clostridiaceae</taxon>
        <taxon>Clostridium</taxon>
    </lineage>
</organism>